<proteinExistence type="evidence at protein level"/>
<comment type="function">
    <text evidence="1">Mannosyltransferase involved in the biosynthesis of the repeat unit of the lipopolysaccharide (LPS) O-antigen region (PubMed:7684736). Catalyzes the addition of a mannose to the rhamnosyl-galactosyl-undecaprenyl diphosphate intermediate (PubMed:7684736).</text>
</comment>
<comment type="catalytic activity">
    <reaction evidence="1">
        <text>alpha-L-rhamnosyl-(1-&gt;3)-alpha-D-galactosyl-1-diphospho-di-trans,octa-cis-undecaprenol + GDP-alpha-D-mannose = alpha-D-Man-(1-&gt;4)-alpha-L-Rha-(1-&gt;3)-alpha-D-Gal-di-trans,octa-cis-undecaprenyl diphosphate + GDP + H(+)</text>
        <dbReference type="Rhea" id="RHEA:66956"/>
        <dbReference type="ChEBI" id="CHEBI:15378"/>
        <dbReference type="ChEBI" id="CHEBI:57527"/>
        <dbReference type="ChEBI" id="CHEBI:58189"/>
        <dbReference type="ChEBI" id="CHEBI:157670"/>
        <dbReference type="ChEBI" id="CHEBI:167467"/>
        <dbReference type="EC" id="2.4.1.378"/>
    </reaction>
    <physiologicalReaction direction="left-to-right" evidence="1">
        <dbReference type="Rhea" id="RHEA:66957"/>
    </physiologicalReaction>
</comment>
<comment type="pathway">
    <text evidence="1">Bacterial outer membrane biogenesis; LPS O-antigen biosynthesis.</text>
</comment>
<comment type="similarity">
    <text evidence="4">Belongs to the glycosyltransferase group 1 family. Glycosyltransferase 4 subfamily.</text>
</comment>
<name>RFBU_SALTY</name>
<gene>
    <name evidence="3" type="primary">rfbU</name>
    <name evidence="2" type="synonym">orf15.4</name>
    <name evidence="5" type="ordered locus">STM2086</name>
</gene>
<evidence type="ECO:0000269" key="1">
    <source>
    </source>
</evidence>
<evidence type="ECO:0000303" key="2">
    <source>
    </source>
</evidence>
<evidence type="ECO:0000303" key="3">
    <source>
    </source>
</evidence>
<evidence type="ECO:0000305" key="4"/>
<evidence type="ECO:0000312" key="5">
    <source>
        <dbReference type="EMBL" id="AAL20990.1"/>
    </source>
</evidence>
<dbReference type="EC" id="2.4.1.378" evidence="1"/>
<dbReference type="EMBL" id="X56793">
    <property type="protein sequence ID" value="CAA40126.1"/>
    <property type="molecule type" value="Genomic_DNA"/>
</dbReference>
<dbReference type="EMBL" id="AE006468">
    <property type="protein sequence ID" value="AAL20990.1"/>
    <property type="molecule type" value="Genomic_DNA"/>
</dbReference>
<dbReference type="PIR" id="S15310">
    <property type="entry name" value="S15310"/>
</dbReference>
<dbReference type="RefSeq" id="NP_461031.1">
    <property type="nucleotide sequence ID" value="NC_003197.2"/>
</dbReference>
<dbReference type="RefSeq" id="WP_001521643.1">
    <property type="nucleotide sequence ID" value="NC_003197.2"/>
</dbReference>
<dbReference type="SMR" id="P26402"/>
<dbReference type="STRING" id="99287.STM2086"/>
<dbReference type="CAZy" id="GT4">
    <property type="family name" value="Glycosyltransferase Family 4"/>
</dbReference>
<dbReference type="PaxDb" id="99287-STM2086"/>
<dbReference type="DNASU" id="1253607"/>
<dbReference type="GeneID" id="1253607"/>
<dbReference type="KEGG" id="stm:STM2086"/>
<dbReference type="PATRIC" id="fig|99287.12.peg.2208"/>
<dbReference type="HOGENOM" id="CLU_009583_27_2_6"/>
<dbReference type="OMA" id="MPLFYNA"/>
<dbReference type="PhylomeDB" id="P26402"/>
<dbReference type="BioCyc" id="MetaCyc:STM2086-MONOMER"/>
<dbReference type="BioCyc" id="SENT99287:STM2086-MONOMER"/>
<dbReference type="BRENDA" id="2.4.1.378">
    <property type="organism ID" value="5542"/>
</dbReference>
<dbReference type="UniPathway" id="UPA00281"/>
<dbReference type="Proteomes" id="UP000001014">
    <property type="component" value="Chromosome"/>
</dbReference>
<dbReference type="GO" id="GO:0016757">
    <property type="term" value="F:glycosyltransferase activity"/>
    <property type="evidence" value="ECO:0000318"/>
    <property type="project" value="GO_Central"/>
</dbReference>
<dbReference type="GO" id="GO:0009103">
    <property type="term" value="P:lipopolysaccharide biosynthetic process"/>
    <property type="evidence" value="ECO:0000318"/>
    <property type="project" value="GO_Central"/>
</dbReference>
<dbReference type="GO" id="GO:0009243">
    <property type="term" value="P:O antigen biosynthetic process"/>
    <property type="evidence" value="ECO:0007669"/>
    <property type="project" value="UniProtKB-UniPathway"/>
</dbReference>
<dbReference type="CDD" id="cd03809">
    <property type="entry name" value="GT4_MtfB-like"/>
    <property type="match status" value="1"/>
</dbReference>
<dbReference type="Gene3D" id="3.40.50.2000">
    <property type="entry name" value="Glycogen Phosphorylase B"/>
    <property type="match status" value="2"/>
</dbReference>
<dbReference type="InterPro" id="IPR001296">
    <property type="entry name" value="Glyco_trans_1"/>
</dbReference>
<dbReference type="InterPro" id="IPR028098">
    <property type="entry name" value="Glyco_trans_4-like_N"/>
</dbReference>
<dbReference type="PANTHER" id="PTHR46401">
    <property type="entry name" value="GLYCOSYLTRANSFERASE WBBK-RELATED"/>
    <property type="match status" value="1"/>
</dbReference>
<dbReference type="PANTHER" id="PTHR46401:SF2">
    <property type="entry name" value="GLYCOSYLTRANSFERASE WBBK-RELATED"/>
    <property type="match status" value="1"/>
</dbReference>
<dbReference type="Pfam" id="PF13439">
    <property type="entry name" value="Glyco_transf_4"/>
    <property type="match status" value="1"/>
</dbReference>
<dbReference type="Pfam" id="PF00534">
    <property type="entry name" value="Glycos_transf_1"/>
    <property type="match status" value="1"/>
</dbReference>
<dbReference type="SUPFAM" id="SSF53756">
    <property type="entry name" value="UDP-Glycosyltransferase/glycogen phosphorylase"/>
    <property type="match status" value="1"/>
</dbReference>
<feature type="chain" id="PRO_0000080307" description="O-antigen chain mannosyltransferase RfbU">
    <location>
        <begin position="1"/>
        <end position="353"/>
    </location>
</feature>
<reference key="1">
    <citation type="journal article" date="1991" name="Mol. Microbiol.">
        <title>Structure and sequence of the rfb (O antigen) gene cluster of Salmonella serovar typhimurium (strain LT2).</title>
        <authorList>
            <person name="Jiang X.-M."/>
            <person name="Neal B."/>
            <person name="Santiago F."/>
            <person name="Lee S.J."/>
            <person name="Romana L.K."/>
            <person name="Reeves P.R."/>
        </authorList>
    </citation>
    <scope>NUCLEOTIDE SEQUENCE [GENOMIC DNA]</scope>
    <source>
        <strain>LT2</strain>
    </source>
</reference>
<reference key="2">
    <citation type="journal article" date="2001" name="Nature">
        <title>Complete genome sequence of Salmonella enterica serovar Typhimurium LT2.</title>
        <authorList>
            <person name="McClelland M."/>
            <person name="Sanderson K.E."/>
            <person name="Spieth J."/>
            <person name="Clifton S.W."/>
            <person name="Latreille P."/>
            <person name="Courtney L."/>
            <person name="Porwollik S."/>
            <person name="Ali J."/>
            <person name="Dante M."/>
            <person name="Du F."/>
            <person name="Hou S."/>
            <person name="Layman D."/>
            <person name="Leonard S."/>
            <person name="Nguyen C."/>
            <person name="Scott K."/>
            <person name="Holmes A."/>
            <person name="Grewal N."/>
            <person name="Mulvaney E."/>
            <person name="Ryan E."/>
            <person name="Sun H."/>
            <person name="Florea L."/>
            <person name="Miller W."/>
            <person name="Stoneking T."/>
            <person name="Nhan M."/>
            <person name="Waterston R."/>
            <person name="Wilson R.K."/>
        </authorList>
    </citation>
    <scope>NUCLEOTIDE SEQUENCE [LARGE SCALE GENOMIC DNA]</scope>
    <source>
        <strain>LT2 / SGSC1412 / ATCC 700720</strain>
    </source>
</reference>
<reference key="3">
    <citation type="journal article" date="1993" name="J. Bacteriol.">
        <title>Glycosyl transferases of O-antigen biosynthesis in Salmonella enterica: identification and characterization of transferase genes of groups B, C2, and E1.</title>
        <authorList>
            <person name="Liu D."/>
            <person name="Haase A.M."/>
            <person name="Lindqvist L."/>
            <person name="Lindberg A.A."/>
            <person name="Reeves P.R."/>
        </authorList>
    </citation>
    <scope>FUNCTION</scope>
    <scope>CATALYTIC ACTIVITY</scope>
    <scope>PATHWAY</scope>
    <source>
        <strain>LT2</strain>
    </source>
</reference>
<protein>
    <recommendedName>
        <fullName evidence="4">O-antigen chain mannosyltransferase RfbU</fullName>
        <ecNumber evidence="1">2.4.1.378</ecNumber>
    </recommendedName>
    <alternativeName>
        <fullName evidence="4">GDP-mannose:alpha-L-Rha-(1-&gt;3)-alpha-D-Gal-PP-Und alpha-1,4-mannosyltransferase</fullName>
    </alternativeName>
</protein>
<accession>P26402</accession>
<keyword id="KW-0328">Glycosyltransferase</keyword>
<keyword id="KW-0448">Lipopolysaccharide biosynthesis</keyword>
<keyword id="KW-1185">Reference proteome</keyword>
<keyword id="KW-0808">Transferase</keyword>
<organism>
    <name type="scientific">Salmonella typhimurium (strain LT2 / SGSC1412 / ATCC 700720)</name>
    <dbReference type="NCBI Taxonomy" id="99287"/>
    <lineage>
        <taxon>Bacteria</taxon>
        <taxon>Pseudomonadati</taxon>
        <taxon>Pseudomonadota</taxon>
        <taxon>Gammaproteobacteria</taxon>
        <taxon>Enterobacterales</taxon>
        <taxon>Enterobacteriaceae</taxon>
        <taxon>Salmonella</taxon>
    </lineage>
</organism>
<sequence length="353" mass="40682">MIVNLSRLGKSGTGMWQYSIKFLTALREIADVDAIICSKVHADYFEKLGYAVVTVPNIVSNTSKTSRLRPLVWYVYSYWLALRVLIKFGNKKLVCTTHHTIPLLRNQTITVHDIRPFYYPDSFIQKVYFRFLLKMSVKRCKHVLTVSYTVKDSIAKTYNVDSEKISVIYNSVNKSDFIQKKEKENYFLAVGASWPHKNIHSFIKNKKVWSDSYNLIIVCGRTDYAMSLQQMVVDLELKDKVTFLHEVSFNELKILYSKAYALVYPSIDEGFGIPPIEAMASNTPVIVSDIPVFHEVLTNGALYVNPDDEKSWQSAIKNIEQLPDAISRFNNYVARYDFDNMKQMVGNWLAESK</sequence>